<gene>
    <name evidence="1" type="primary">purC</name>
    <name type="ordered locus">SPs0020</name>
</gene>
<comment type="catalytic activity">
    <reaction evidence="1">
        <text>5-amino-1-(5-phospho-D-ribosyl)imidazole-4-carboxylate + L-aspartate + ATP = (2S)-2-[5-amino-1-(5-phospho-beta-D-ribosyl)imidazole-4-carboxamido]succinate + ADP + phosphate + 2 H(+)</text>
        <dbReference type="Rhea" id="RHEA:22628"/>
        <dbReference type="ChEBI" id="CHEBI:15378"/>
        <dbReference type="ChEBI" id="CHEBI:29991"/>
        <dbReference type="ChEBI" id="CHEBI:30616"/>
        <dbReference type="ChEBI" id="CHEBI:43474"/>
        <dbReference type="ChEBI" id="CHEBI:58443"/>
        <dbReference type="ChEBI" id="CHEBI:77657"/>
        <dbReference type="ChEBI" id="CHEBI:456216"/>
        <dbReference type="EC" id="6.3.2.6"/>
    </reaction>
</comment>
<comment type="pathway">
    <text evidence="1">Purine metabolism; IMP biosynthesis via de novo pathway; 5-amino-1-(5-phospho-D-ribosyl)imidazole-4-carboxamide from 5-amino-1-(5-phospho-D-ribosyl)imidazole-4-carboxylate: step 1/2.</text>
</comment>
<comment type="similarity">
    <text evidence="1">Belongs to the SAICAR synthetase family.</text>
</comment>
<comment type="sequence caution" evidence="2">
    <conflict type="erroneous initiation">
        <sequence resource="EMBL-CDS" id="BAC63115"/>
    </conflict>
</comment>
<dbReference type="EC" id="6.3.2.6" evidence="1"/>
<dbReference type="EMBL" id="BA000034">
    <property type="protein sequence ID" value="BAC63115.1"/>
    <property type="status" value="ALT_INIT"/>
    <property type="molecule type" value="Genomic_DNA"/>
</dbReference>
<dbReference type="RefSeq" id="WP_011054091.1">
    <property type="nucleotide sequence ID" value="NC_004606.1"/>
</dbReference>
<dbReference type="SMR" id="P0DD57"/>
<dbReference type="KEGG" id="sps:SPs0020"/>
<dbReference type="HOGENOM" id="CLU_061495_2_0_9"/>
<dbReference type="UniPathway" id="UPA00074">
    <property type="reaction ID" value="UER00131"/>
</dbReference>
<dbReference type="GO" id="GO:0005524">
    <property type="term" value="F:ATP binding"/>
    <property type="evidence" value="ECO:0007669"/>
    <property type="project" value="UniProtKB-KW"/>
</dbReference>
<dbReference type="GO" id="GO:0004639">
    <property type="term" value="F:phosphoribosylaminoimidazolesuccinocarboxamide synthase activity"/>
    <property type="evidence" value="ECO:0007669"/>
    <property type="project" value="UniProtKB-UniRule"/>
</dbReference>
<dbReference type="GO" id="GO:0006189">
    <property type="term" value="P:'de novo' IMP biosynthetic process"/>
    <property type="evidence" value="ECO:0007669"/>
    <property type="project" value="UniProtKB-UniRule"/>
</dbReference>
<dbReference type="GO" id="GO:0009236">
    <property type="term" value="P:cobalamin biosynthetic process"/>
    <property type="evidence" value="ECO:0007669"/>
    <property type="project" value="InterPro"/>
</dbReference>
<dbReference type="CDD" id="cd01415">
    <property type="entry name" value="SAICAR_synt_PurC"/>
    <property type="match status" value="1"/>
</dbReference>
<dbReference type="FunFam" id="3.30.470.20:FF:000006">
    <property type="entry name" value="Phosphoribosylaminoimidazole-succinocarboxamide synthase"/>
    <property type="match status" value="1"/>
</dbReference>
<dbReference type="Gene3D" id="3.30.470.20">
    <property type="entry name" value="ATP-grasp fold, B domain"/>
    <property type="match status" value="1"/>
</dbReference>
<dbReference type="Gene3D" id="3.30.200.20">
    <property type="entry name" value="Phosphorylase Kinase, domain 1"/>
    <property type="match status" value="1"/>
</dbReference>
<dbReference type="HAMAP" id="MF_00137">
    <property type="entry name" value="SAICAR_synth"/>
    <property type="match status" value="1"/>
</dbReference>
<dbReference type="InterPro" id="IPR028923">
    <property type="entry name" value="SAICAR_synt/ADE2_N"/>
</dbReference>
<dbReference type="InterPro" id="IPR033934">
    <property type="entry name" value="SAICAR_synt_PurC"/>
</dbReference>
<dbReference type="InterPro" id="IPR001636">
    <property type="entry name" value="SAICAR_synth"/>
</dbReference>
<dbReference type="InterPro" id="IPR050089">
    <property type="entry name" value="SAICAR_synthetase"/>
</dbReference>
<dbReference type="InterPro" id="IPR018236">
    <property type="entry name" value="SAICAR_synthetase_CS"/>
</dbReference>
<dbReference type="NCBIfam" id="TIGR00081">
    <property type="entry name" value="purC"/>
    <property type="match status" value="1"/>
</dbReference>
<dbReference type="PANTHER" id="PTHR43599">
    <property type="entry name" value="MULTIFUNCTIONAL PROTEIN ADE2"/>
    <property type="match status" value="1"/>
</dbReference>
<dbReference type="PANTHER" id="PTHR43599:SF3">
    <property type="entry name" value="SI:DKEY-6E2.2"/>
    <property type="match status" value="1"/>
</dbReference>
<dbReference type="Pfam" id="PF01259">
    <property type="entry name" value="SAICAR_synt"/>
    <property type="match status" value="1"/>
</dbReference>
<dbReference type="SUPFAM" id="SSF56104">
    <property type="entry name" value="SAICAR synthase-like"/>
    <property type="match status" value="1"/>
</dbReference>
<dbReference type="PROSITE" id="PS01057">
    <property type="entry name" value="SAICAR_SYNTHETASE_1"/>
    <property type="match status" value="1"/>
</dbReference>
<dbReference type="PROSITE" id="PS01058">
    <property type="entry name" value="SAICAR_SYNTHETASE_2"/>
    <property type="match status" value="1"/>
</dbReference>
<reference key="1">
    <citation type="journal article" date="2003" name="Genome Res.">
        <title>Genome sequence of an M3 strain of Streptococcus pyogenes reveals a large-scale genomic rearrangement in invasive strains and new insights into phage evolution.</title>
        <authorList>
            <person name="Nakagawa I."/>
            <person name="Kurokawa K."/>
            <person name="Yamashita A."/>
            <person name="Nakata M."/>
            <person name="Tomiyasu Y."/>
            <person name="Okahashi N."/>
            <person name="Kawabata S."/>
            <person name="Yamazaki K."/>
            <person name="Shiba T."/>
            <person name="Yasunaga T."/>
            <person name="Hayashi H."/>
            <person name="Hattori M."/>
            <person name="Hamada S."/>
        </authorList>
    </citation>
    <scope>NUCLEOTIDE SEQUENCE [LARGE SCALE GENOMIC DNA]</scope>
    <source>
        <strain>SSI-1</strain>
    </source>
</reference>
<feature type="chain" id="PRO_0000411468" description="Phosphoribosylaminoimidazole-succinocarboxamide synthase">
    <location>
        <begin position="1"/>
        <end position="234"/>
    </location>
</feature>
<accession>P0DD57</accession>
<accession>Q8K8Z0</accession>
<organism>
    <name type="scientific">Streptococcus pyogenes serotype M3 (strain SSI-1)</name>
    <dbReference type="NCBI Taxonomy" id="193567"/>
    <lineage>
        <taxon>Bacteria</taxon>
        <taxon>Bacillati</taxon>
        <taxon>Bacillota</taxon>
        <taxon>Bacilli</taxon>
        <taxon>Lactobacillales</taxon>
        <taxon>Streptococcaceae</taxon>
        <taxon>Streptococcus</taxon>
    </lineage>
</organism>
<name>PUR7_STRPQ</name>
<proteinExistence type="inferred from homology"/>
<sequence length="234" mass="26873">MTNQLIYKGKAKDIYSTKDENVIRTVYKDQATMLNGARKETIDGKGALNNQISSLIFEKLNKAGVATHYIEQISKNEQLNKKVDIIPLEVVLRNVTAGSFSKRFGVEEGRVLETPIVEFYYKNDDLNDPFINDEHVKFLGIVNDEEIAYLKGETRRINELLKCWFAQIGLNLIDFKLEFGFDQEGTIILADEFSPDNCRLWDKNGNHMDKDVFRRDLGNLTDVYQVVLEKLIAL</sequence>
<keyword id="KW-0067">ATP-binding</keyword>
<keyword id="KW-0436">Ligase</keyword>
<keyword id="KW-0547">Nucleotide-binding</keyword>
<keyword id="KW-0658">Purine biosynthesis</keyword>
<evidence type="ECO:0000255" key="1">
    <source>
        <dbReference type="HAMAP-Rule" id="MF_00137"/>
    </source>
</evidence>
<evidence type="ECO:0000305" key="2"/>
<protein>
    <recommendedName>
        <fullName evidence="1">Phosphoribosylaminoimidazole-succinocarboxamide synthase</fullName>
        <ecNumber evidence="1">6.3.2.6</ecNumber>
    </recommendedName>
    <alternativeName>
        <fullName evidence="1">SAICAR synthetase</fullName>
    </alternativeName>
</protein>